<gene>
    <name evidence="1" type="primary">uppP</name>
    <name type="ordered locus">ABBFA_000700</name>
</gene>
<reference key="1">
    <citation type="journal article" date="2008" name="J. Bacteriol.">
        <title>Comparative genome sequence analysis of multidrug-resistant Acinetobacter baumannii.</title>
        <authorList>
            <person name="Adams M.D."/>
            <person name="Goglin K."/>
            <person name="Molyneaux N."/>
            <person name="Hujer K.M."/>
            <person name="Lavender H."/>
            <person name="Jamison J.J."/>
            <person name="MacDonald I.J."/>
            <person name="Martin K.M."/>
            <person name="Russo T."/>
            <person name="Campagnari A.A."/>
            <person name="Hujer A.M."/>
            <person name="Bonomo R.A."/>
            <person name="Gill S.R."/>
        </authorList>
    </citation>
    <scope>NUCLEOTIDE SEQUENCE [LARGE SCALE GENOMIC DNA]</scope>
    <source>
        <strain>AB307-0294</strain>
    </source>
</reference>
<comment type="function">
    <text evidence="1">Catalyzes the dephosphorylation of undecaprenyl diphosphate (UPP). Confers resistance to bacitracin.</text>
</comment>
<comment type="catalytic activity">
    <reaction evidence="1">
        <text>di-trans,octa-cis-undecaprenyl diphosphate + H2O = di-trans,octa-cis-undecaprenyl phosphate + phosphate + H(+)</text>
        <dbReference type="Rhea" id="RHEA:28094"/>
        <dbReference type="ChEBI" id="CHEBI:15377"/>
        <dbReference type="ChEBI" id="CHEBI:15378"/>
        <dbReference type="ChEBI" id="CHEBI:43474"/>
        <dbReference type="ChEBI" id="CHEBI:58405"/>
        <dbReference type="ChEBI" id="CHEBI:60392"/>
        <dbReference type="EC" id="3.6.1.27"/>
    </reaction>
</comment>
<comment type="subcellular location">
    <subcellularLocation>
        <location evidence="1">Cell inner membrane</location>
        <topology evidence="1">Multi-pass membrane protein</topology>
    </subcellularLocation>
</comment>
<comment type="miscellaneous">
    <text>Bacitracin is thought to be involved in the inhibition of peptidoglycan synthesis by sequestering undecaprenyl diphosphate, thereby reducing the pool of lipid carrier available.</text>
</comment>
<comment type="similarity">
    <text evidence="1">Belongs to the UppP family.</text>
</comment>
<evidence type="ECO:0000255" key="1">
    <source>
        <dbReference type="HAMAP-Rule" id="MF_01006"/>
    </source>
</evidence>
<dbReference type="EC" id="3.6.1.27" evidence="1"/>
<dbReference type="EMBL" id="CP001172">
    <property type="protein sequence ID" value="ACJ57867.1"/>
    <property type="molecule type" value="Genomic_DNA"/>
</dbReference>
<dbReference type="RefSeq" id="WP_000426935.1">
    <property type="nucleotide sequence ID" value="NZ_CP001172.1"/>
</dbReference>
<dbReference type="SMR" id="B7GXE2"/>
<dbReference type="HOGENOM" id="CLU_060296_2_0_6"/>
<dbReference type="Proteomes" id="UP000006924">
    <property type="component" value="Chromosome"/>
</dbReference>
<dbReference type="GO" id="GO:0005886">
    <property type="term" value="C:plasma membrane"/>
    <property type="evidence" value="ECO:0007669"/>
    <property type="project" value="UniProtKB-SubCell"/>
</dbReference>
<dbReference type="GO" id="GO:0050380">
    <property type="term" value="F:undecaprenyl-diphosphatase activity"/>
    <property type="evidence" value="ECO:0007669"/>
    <property type="project" value="UniProtKB-UniRule"/>
</dbReference>
<dbReference type="GO" id="GO:0071555">
    <property type="term" value="P:cell wall organization"/>
    <property type="evidence" value="ECO:0007669"/>
    <property type="project" value="UniProtKB-KW"/>
</dbReference>
<dbReference type="GO" id="GO:0009252">
    <property type="term" value="P:peptidoglycan biosynthetic process"/>
    <property type="evidence" value="ECO:0007669"/>
    <property type="project" value="UniProtKB-KW"/>
</dbReference>
<dbReference type="GO" id="GO:0008360">
    <property type="term" value="P:regulation of cell shape"/>
    <property type="evidence" value="ECO:0007669"/>
    <property type="project" value="UniProtKB-KW"/>
</dbReference>
<dbReference type="GO" id="GO:0046677">
    <property type="term" value="P:response to antibiotic"/>
    <property type="evidence" value="ECO:0007669"/>
    <property type="project" value="UniProtKB-UniRule"/>
</dbReference>
<dbReference type="HAMAP" id="MF_01006">
    <property type="entry name" value="Undec_diphosphatase"/>
    <property type="match status" value="1"/>
</dbReference>
<dbReference type="InterPro" id="IPR003824">
    <property type="entry name" value="UppP"/>
</dbReference>
<dbReference type="NCBIfam" id="NF001389">
    <property type="entry name" value="PRK00281.1-2"/>
    <property type="match status" value="1"/>
</dbReference>
<dbReference type="NCBIfam" id="NF001390">
    <property type="entry name" value="PRK00281.1-4"/>
    <property type="match status" value="1"/>
</dbReference>
<dbReference type="NCBIfam" id="TIGR00753">
    <property type="entry name" value="undec_PP_bacA"/>
    <property type="match status" value="1"/>
</dbReference>
<dbReference type="PANTHER" id="PTHR30622">
    <property type="entry name" value="UNDECAPRENYL-DIPHOSPHATASE"/>
    <property type="match status" value="1"/>
</dbReference>
<dbReference type="PANTHER" id="PTHR30622:SF3">
    <property type="entry name" value="UNDECAPRENYL-DIPHOSPHATASE"/>
    <property type="match status" value="1"/>
</dbReference>
<dbReference type="Pfam" id="PF02673">
    <property type="entry name" value="BacA"/>
    <property type="match status" value="1"/>
</dbReference>
<feature type="chain" id="PRO_1000134671" description="Undecaprenyl-diphosphatase">
    <location>
        <begin position="1"/>
        <end position="272"/>
    </location>
</feature>
<feature type="transmembrane region" description="Helical" evidence="1">
    <location>
        <begin position="4"/>
        <end position="24"/>
    </location>
</feature>
<feature type="transmembrane region" description="Helical" evidence="1">
    <location>
        <begin position="43"/>
        <end position="63"/>
    </location>
</feature>
<feature type="transmembrane region" description="Helical" evidence="1">
    <location>
        <begin position="86"/>
        <end position="106"/>
    </location>
</feature>
<feature type="transmembrane region" description="Helical" evidence="1">
    <location>
        <begin position="109"/>
        <end position="129"/>
    </location>
</feature>
<feature type="transmembrane region" description="Helical" evidence="1">
    <location>
        <begin position="145"/>
        <end position="165"/>
    </location>
</feature>
<feature type="transmembrane region" description="Helical" evidence="1">
    <location>
        <begin position="186"/>
        <end position="206"/>
    </location>
</feature>
<feature type="transmembrane region" description="Helical" evidence="1">
    <location>
        <begin position="222"/>
        <end position="242"/>
    </location>
</feature>
<feature type="transmembrane region" description="Helical" evidence="1">
    <location>
        <begin position="249"/>
        <end position="269"/>
    </location>
</feature>
<keyword id="KW-0046">Antibiotic resistance</keyword>
<keyword id="KW-0997">Cell inner membrane</keyword>
<keyword id="KW-1003">Cell membrane</keyword>
<keyword id="KW-0133">Cell shape</keyword>
<keyword id="KW-0961">Cell wall biogenesis/degradation</keyword>
<keyword id="KW-0378">Hydrolase</keyword>
<keyword id="KW-0472">Membrane</keyword>
<keyword id="KW-0573">Peptidoglycan synthesis</keyword>
<keyword id="KW-0812">Transmembrane</keyword>
<keyword id="KW-1133">Transmembrane helix</keyword>
<protein>
    <recommendedName>
        <fullName evidence="1">Undecaprenyl-diphosphatase</fullName>
        <ecNumber evidence="1">3.6.1.27</ecNumber>
    </recommendedName>
    <alternativeName>
        <fullName evidence="1">Bacitracin resistance protein</fullName>
    </alternativeName>
    <alternativeName>
        <fullName evidence="1">Undecaprenyl pyrophosphate phosphatase</fullName>
    </alternativeName>
</protein>
<sequence length="272" mass="29506">MENFEVIKALFLGFVEGLTEFLPISSTGHLILFGHIIDFHSDGGRVFEVVIQLGAILAVCWLYRQKIINLIKGFFSGDVESRHFAISVLIAFSPAVIIGVLAVDFIKSVLFSPIVVAIALIVGALIIFWVESKQFEHKTDDATKITFKQALLVGLAQCVAMIPGTSRSGATIVGGMFAGLSRKAATEFSFFLAMPTMLGAATFDLIKNADVLTSDNMVNIGVGFVAAFIAALLVVKALVLFVERHTLRVFAWYRIVLGVIILIAAMFFNLSA</sequence>
<organism>
    <name type="scientific">Acinetobacter baumannii (strain AB307-0294)</name>
    <dbReference type="NCBI Taxonomy" id="557600"/>
    <lineage>
        <taxon>Bacteria</taxon>
        <taxon>Pseudomonadati</taxon>
        <taxon>Pseudomonadota</taxon>
        <taxon>Gammaproteobacteria</taxon>
        <taxon>Moraxellales</taxon>
        <taxon>Moraxellaceae</taxon>
        <taxon>Acinetobacter</taxon>
        <taxon>Acinetobacter calcoaceticus/baumannii complex</taxon>
    </lineage>
</organism>
<accession>B7GXE2</accession>
<proteinExistence type="inferred from homology"/>
<name>UPPP_ACIB3</name>